<comment type="function">
    <text evidence="1">Catalyzes the addition of meso-diaminopimelic acid to the nucleotide precursor UDP-N-acetylmuramoyl-L-alanyl-D-glutamate (UMAG) in the biosynthesis of bacterial cell-wall peptidoglycan.</text>
</comment>
<comment type="catalytic activity">
    <reaction evidence="1">
        <text>UDP-N-acetyl-alpha-D-muramoyl-L-alanyl-D-glutamate + meso-2,6-diaminopimelate + ATP = UDP-N-acetyl-alpha-D-muramoyl-L-alanyl-gamma-D-glutamyl-meso-2,6-diaminopimelate + ADP + phosphate + H(+)</text>
        <dbReference type="Rhea" id="RHEA:23676"/>
        <dbReference type="ChEBI" id="CHEBI:15378"/>
        <dbReference type="ChEBI" id="CHEBI:30616"/>
        <dbReference type="ChEBI" id="CHEBI:43474"/>
        <dbReference type="ChEBI" id="CHEBI:57791"/>
        <dbReference type="ChEBI" id="CHEBI:83900"/>
        <dbReference type="ChEBI" id="CHEBI:83905"/>
        <dbReference type="ChEBI" id="CHEBI:456216"/>
        <dbReference type="EC" id="6.3.2.13"/>
    </reaction>
</comment>
<comment type="cofactor">
    <cofactor evidence="1">
        <name>Mg(2+)</name>
        <dbReference type="ChEBI" id="CHEBI:18420"/>
    </cofactor>
</comment>
<comment type="pathway">
    <text evidence="1">Cell wall biogenesis; peptidoglycan biosynthesis.</text>
</comment>
<comment type="subcellular location">
    <subcellularLocation>
        <location evidence="1">Cytoplasm</location>
    </subcellularLocation>
</comment>
<comment type="PTM">
    <text evidence="1">Carboxylation is probably crucial for Mg(2+) binding and, consequently, for the gamma-phosphate positioning of ATP.</text>
</comment>
<comment type="similarity">
    <text evidence="1">Belongs to the MurCDEF family. MurE subfamily.</text>
</comment>
<gene>
    <name evidence="1" type="primary">murE</name>
    <name type="ordered locus">PSPTO_4413</name>
</gene>
<dbReference type="EC" id="6.3.2.13" evidence="1"/>
<dbReference type="EMBL" id="AE016853">
    <property type="protein sequence ID" value="AAO57862.1"/>
    <property type="molecule type" value="Genomic_DNA"/>
</dbReference>
<dbReference type="RefSeq" id="NP_794167.1">
    <property type="nucleotide sequence ID" value="NC_004578.1"/>
</dbReference>
<dbReference type="RefSeq" id="WP_005766562.1">
    <property type="nucleotide sequence ID" value="NC_004578.1"/>
</dbReference>
<dbReference type="SMR" id="Q87WY0"/>
<dbReference type="STRING" id="223283.PSPTO_4413"/>
<dbReference type="GeneID" id="1186094"/>
<dbReference type="KEGG" id="pst:PSPTO_4413"/>
<dbReference type="PATRIC" id="fig|223283.9.peg.4528"/>
<dbReference type="eggNOG" id="COG0769">
    <property type="taxonomic scope" value="Bacteria"/>
</dbReference>
<dbReference type="HOGENOM" id="CLU_022291_3_2_6"/>
<dbReference type="OrthoDB" id="9800958at2"/>
<dbReference type="PhylomeDB" id="Q87WY0"/>
<dbReference type="UniPathway" id="UPA00219"/>
<dbReference type="Proteomes" id="UP000002515">
    <property type="component" value="Chromosome"/>
</dbReference>
<dbReference type="GO" id="GO:0005737">
    <property type="term" value="C:cytoplasm"/>
    <property type="evidence" value="ECO:0007669"/>
    <property type="project" value="UniProtKB-SubCell"/>
</dbReference>
<dbReference type="GO" id="GO:0005524">
    <property type="term" value="F:ATP binding"/>
    <property type="evidence" value="ECO:0007669"/>
    <property type="project" value="UniProtKB-UniRule"/>
</dbReference>
<dbReference type="GO" id="GO:0000287">
    <property type="term" value="F:magnesium ion binding"/>
    <property type="evidence" value="ECO:0007669"/>
    <property type="project" value="UniProtKB-UniRule"/>
</dbReference>
<dbReference type="GO" id="GO:0008765">
    <property type="term" value="F:UDP-N-acetylmuramoylalanyl-D-glutamate-2,6-diaminopimelate ligase activity"/>
    <property type="evidence" value="ECO:0007669"/>
    <property type="project" value="UniProtKB-UniRule"/>
</dbReference>
<dbReference type="GO" id="GO:0051301">
    <property type="term" value="P:cell division"/>
    <property type="evidence" value="ECO:0007669"/>
    <property type="project" value="UniProtKB-KW"/>
</dbReference>
<dbReference type="GO" id="GO:0071555">
    <property type="term" value="P:cell wall organization"/>
    <property type="evidence" value="ECO:0007669"/>
    <property type="project" value="UniProtKB-KW"/>
</dbReference>
<dbReference type="GO" id="GO:0009252">
    <property type="term" value="P:peptidoglycan biosynthetic process"/>
    <property type="evidence" value="ECO:0007669"/>
    <property type="project" value="UniProtKB-UniRule"/>
</dbReference>
<dbReference type="GO" id="GO:0008360">
    <property type="term" value="P:regulation of cell shape"/>
    <property type="evidence" value="ECO:0007669"/>
    <property type="project" value="UniProtKB-KW"/>
</dbReference>
<dbReference type="Gene3D" id="3.90.190.20">
    <property type="entry name" value="Mur ligase, C-terminal domain"/>
    <property type="match status" value="1"/>
</dbReference>
<dbReference type="Gene3D" id="3.40.1190.10">
    <property type="entry name" value="Mur-like, catalytic domain"/>
    <property type="match status" value="1"/>
</dbReference>
<dbReference type="Gene3D" id="3.40.1390.10">
    <property type="entry name" value="MurE/MurF, N-terminal domain"/>
    <property type="match status" value="1"/>
</dbReference>
<dbReference type="HAMAP" id="MF_00208">
    <property type="entry name" value="MurE"/>
    <property type="match status" value="1"/>
</dbReference>
<dbReference type="InterPro" id="IPR036565">
    <property type="entry name" value="Mur-like_cat_sf"/>
</dbReference>
<dbReference type="InterPro" id="IPR004101">
    <property type="entry name" value="Mur_ligase_C"/>
</dbReference>
<dbReference type="InterPro" id="IPR036615">
    <property type="entry name" value="Mur_ligase_C_dom_sf"/>
</dbReference>
<dbReference type="InterPro" id="IPR013221">
    <property type="entry name" value="Mur_ligase_cen"/>
</dbReference>
<dbReference type="InterPro" id="IPR000713">
    <property type="entry name" value="Mur_ligase_N"/>
</dbReference>
<dbReference type="InterPro" id="IPR035911">
    <property type="entry name" value="MurE/MurF_N"/>
</dbReference>
<dbReference type="InterPro" id="IPR005761">
    <property type="entry name" value="UDP-N-AcMur-Glu-dNH2Pim_ligase"/>
</dbReference>
<dbReference type="NCBIfam" id="TIGR01085">
    <property type="entry name" value="murE"/>
    <property type="match status" value="1"/>
</dbReference>
<dbReference type="NCBIfam" id="NF001124">
    <property type="entry name" value="PRK00139.1-2"/>
    <property type="match status" value="1"/>
</dbReference>
<dbReference type="NCBIfam" id="NF001126">
    <property type="entry name" value="PRK00139.1-4"/>
    <property type="match status" value="1"/>
</dbReference>
<dbReference type="PANTHER" id="PTHR23135">
    <property type="entry name" value="MUR LIGASE FAMILY MEMBER"/>
    <property type="match status" value="1"/>
</dbReference>
<dbReference type="PANTHER" id="PTHR23135:SF4">
    <property type="entry name" value="UDP-N-ACETYLMURAMOYL-L-ALANYL-D-GLUTAMATE--2,6-DIAMINOPIMELATE LIGASE MURE HOMOLOG, CHLOROPLASTIC"/>
    <property type="match status" value="1"/>
</dbReference>
<dbReference type="Pfam" id="PF01225">
    <property type="entry name" value="Mur_ligase"/>
    <property type="match status" value="1"/>
</dbReference>
<dbReference type="Pfam" id="PF02875">
    <property type="entry name" value="Mur_ligase_C"/>
    <property type="match status" value="1"/>
</dbReference>
<dbReference type="Pfam" id="PF08245">
    <property type="entry name" value="Mur_ligase_M"/>
    <property type="match status" value="1"/>
</dbReference>
<dbReference type="SUPFAM" id="SSF53623">
    <property type="entry name" value="MurD-like peptide ligases, catalytic domain"/>
    <property type="match status" value="1"/>
</dbReference>
<dbReference type="SUPFAM" id="SSF53244">
    <property type="entry name" value="MurD-like peptide ligases, peptide-binding domain"/>
    <property type="match status" value="1"/>
</dbReference>
<dbReference type="SUPFAM" id="SSF63418">
    <property type="entry name" value="MurE/MurF N-terminal domain"/>
    <property type="match status" value="1"/>
</dbReference>
<proteinExistence type="inferred from homology"/>
<feature type="chain" id="PRO_0000101928" description="UDP-N-acetylmuramoyl-L-alanyl-D-glutamate--2,6-diaminopimelate ligase">
    <location>
        <begin position="1"/>
        <end position="487"/>
    </location>
</feature>
<feature type="short sequence motif" description="Meso-diaminopimelate recognition motif">
    <location>
        <begin position="402"/>
        <end position="405"/>
    </location>
</feature>
<feature type="binding site" evidence="1">
    <location>
        <position position="23"/>
    </location>
    <ligand>
        <name>UDP-N-acetyl-alpha-D-muramoyl-L-alanyl-D-glutamate</name>
        <dbReference type="ChEBI" id="CHEBI:83900"/>
    </ligand>
</feature>
<feature type="binding site" evidence="1">
    <location>
        <position position="25"/>
    </location>
    <ligand>
        <name>UDP-N-acetyl-alpha-D-muramoyl-L-alanyl-D-glutamate</name>
        <dbReference type="ChEBI" id="CHEBI:83900"/>
    </ligand>
</feature>
<feature type="binding site" evidence="1">
    <location>
        <begin position="108"/>
        <end position="114"/>
    </location>
    <ligand>
        <name>ATP</name>
        <dbReference type="ChEBI" id="CHEBI:30616"/>
    </ligand>
</feature>
<feature type="binding site" evidence="1">
    <location>
        <begin position="150"/>
        <end position="151"/>
    </location>
    <ligand>
        <name>UDP-N-acetyl-alpha-D-muramoyl-L-alanyl-D-glutamate</name>
        <dbReference type="ChEBI" id="CHEBI:83900"/>
    </ligand>
</feature>
<feature type="binding site" evidence="1">
    <location>
        <position position="177"/>
    </location>
    <ligand>
        <name>UDP-N-acetyl-alpha-D-muramoyl-L-alanyl-D-glutamate</name>
        <dbReference type="ChEBI" id="CHEBI:83900"/>
    </ligand>
</feature>
<feature type="binding site" evidence="1">
    <location>
        <position position="183"/>
    </location>
    <ligand>
        <name>UDP-N-acetyl-alpha-D-muramoyl-L-alanyl-D-glutamate</name>
        <dbReference type="ChEBI" id="CHEBI:83900"/>
    </ligand>
</feature>
<feature type="binding site" evidence="1">
    <location>
        <position position="185"/>
    </location>
    <ligand>
        <name>UDP-N-acetyl-alpha-D-muramoyl-L-alanyl-D-glutamate</name>
        <dbReference type="ChEBI" id="CHEBI:83900"/>
    </ligand>
</feature>
<feature type="binding site" evidence="1">
    <location>
        <position position="378"/>
    </location>
    <ligand>
        <name>meso-2,6-diaminopimelate</name>
        <dbReference type="ChEBI" id="CHEBI:57791"/>
    </ligand>
</feature>
<feature type="binding site" evidence="1">
    <location>
        <begin position="402"/>
        <end position="405"/>
    </location>
    <ligand>
        <name>meso-2,6-diaminopimelate</name>
        <dbReference type="ChEBI" id="CHEBI:57791"/>
    </ligand>
</feature>
<feature type="binding site" evidence="1">
    <location>
        <position position="453"/>
    </location>
    <ligand>
        <name>meso-2,6-diaminopimelate</name>
        <dbReference type="ChEBI" id="CHEBI:57791"/>
    </ligand>
</feature>
<feature type="binding site" evidence="1">
    <location>
        <position position="457"/>
    </location>
    <ligand>
        <name>meso-2,6-diaminopimelate</name>
        <dbReference type="ChEBI" id="CHEBI:57791"/>
    </ligand>
</feature>
<feature type="modified residue" description="N6-carboxylysine" evidence="1">
    <location>
        <position position="217"/>
    </location>
</feature>
<protein>
    <recommendedName>
        <fullName evidence="1">UDP-N-acetylmuramoyl-L-alanyl-D-glutamate--2,6-diaminopimelate ligase</fullName>
        <ecNumber evidence="1">6.3.2.13</ecNumber>
    </recommendedName>
    <alternativeName>
        <fullName evidence="1">Meso-A2pm-adding enzyme</fullName>
    </alternativeName>
    <alternativeName>
        <fullName evidence="1">Meso-diaminopimelate-adding enzyme</fullName>
    </alternativeName>
    <alternativeName>
        <fullName evidence="1">UDP-MurNAc-L-Ala-D-Glu:meso-diaminopimelate ligase</fullName>
    </alternativeName>
    <alternativeName>
        <fullName evidence="1">UDP-MurNAc-tripeptide synthetase</fullName>
    </alternativeName>
    <alternativeName>
        <fullName evidence="1">UDP-N-acetylmuramyl-tripeptide synthetase</fullName>
    </alternativeName>
</protein>
<organism>
    <name type="scientific">Pseudomonas syringae pv. tomato (strain ATCC BAA-871 / DC3000)</name>
    <dbReference type="NCBI Taxonomy" id="223283"/>
    <lineage>
        <taxon>Bacteria</taxon>
        <taxon>Pseudomonadati</taxon>
        <taxon>Pseudomonadota</taxon>
        <taxon>Gammaproteobacteria</taxon>
        <taxon>Pseudomonadales</taxon>
        <taxon>Pseudomonadaceae</taxon>
        <taxon>Pseudomonas</taxon>
    </lineage>
</organism>
<name>MURE_PSESM</name>
<sequence length="487" mass="52197">MAFNLSKIFAHTDRDPLIRELTLDSRNVRPGDLFLAVPGIKVDGRAHIADALKRGAAAVAYEVEGATVLPITDVPLIPVKGLAAQLSDVAGRFYGDPSRSLNLVGVTGTNGKTSVTQLVAQALDALGQRCGIVGTLGTGFYGALQSGRHTTPDPIAVQAALTDLRKAGARAVAMEVSSHGLDQGRATALAFDVAVLTNLSRDHLDYHGTMEAYAAAKAKLFAWPNLNCRVINLDDDFGRELAGLKQESRLITYSQLDSSAYLYCRDAKFDDDGVRATLVTPQGEHFLRSSLLGRFNLSNVLAAVGALLGLDYALDEILKVLPKLEGPVGRMQRLGGADKPLVVVDYAHTPDALEKVLEALRPHAKGRLLCLFGCGGDRDRGKRPLMAEVVERLADGVWVTDDNPRSEAPTNIFDDIRPGFVTADKVRFIEGRGQAIAELIASATVDDVVVLAGKGHEDYQEIDGKRQPFSDLEEAATALAAWGPEND</sequence>
<reference key="1">
    <citation type="journal article" date="2003" name="Proc. Natl. Acad. Sci. U.S.A.">
        <title>The complete genome sequence of the Arabidopsis and tomato pathogen Pseudomonas syringae pv. tomato DC3000.</title>
        <authorList>
            <person name="Buell C.R."/>
            <person name="Joardar V."/>
            <person name="Lindeberg M."/>
            <person name="Selengut J."/>
            <person name="Paulsen I.T."/>
            <person name="Gwinn M.L."/>
            <person name="Dodson R.J."/>
            <person name="DeBoy R.T."/>
            <person name="Durkin A.S."/>
            <person name="Kolonay J.F."/>
            <person name="Madupu R."/>
            <person name="Daugherty S.C."/>
            <person name="Brinkac L.M."/>
            <person name="Beanan M.J."/>
            <person name="Haft D.H."/>
            <person name="Nelson W.C."/>
            <person name="Davidsen T.M."/>
            <person name="Zafar N."/>
            <person name="Zhou L."/>
            <person name="Liu J."/>
            <person name="Yuan Q."/>
            <person name="Khouri H.M."/>
            <person name="Fedorova N.B."/>
            <person name="Tran B."/>
            <person name="Russell D."/>
            <person name="Berry K.J."/>
            <person name="Utterback T.R."/>
            <person name="Van Aken S.E."/>
            <person name="Feldblyum T.V."/>
            <person name="D'Ascenzo M."/>
            <person name="Deng W.-L."/>
            <person name="Ramos A.R."/>
            <person name="Alfano J.R."/>
            <person name="Cartinhour S."/>
            <person name="Chatterjee A.K."/>
            <person name="Delaney T.P."/>
            <person name="Lazarowitz S.G."/>
            <person name="Martin G.B."/>
            <person name="Schneider D.J."/>
            <person name="Tang X."/>
            <person name="Bender C.L."/>
            <person name="White O."/>
            <person name="Fraser C.M."/>
            <person name="Collmer A."/>
        </authorList>
    </citation>
    <scope>NUCLEOTIDE SEQUENCE [LARGE SCALE GENOMIC DNA]</scope>
    <source>
        <strain>ATCC BAA-871 / DC3000</strain>
    </source>
</reference>
<keyword id="KW-0067">ATP-binding</keyword>
<keyword id="KW-0131">Cell cycle</keyword>
<keyword id="KW-0132">Cell division</keyword>
<keyword id="KW-0133">Cell shape</keyword>
<keyword id="KW-0961">Cell wall biogenesis/degradation</keyword>
<keyword id="KW-0963">Cytoplasm</keyword>
<keyword id="KW-0436">Ligase</keyword>
<keyword id="KW-0460">Magnesium</keyword>
<keyword id="KW-0547">Nucleotide-binding</keyword>
<keyword id="KW-0573">Peptidoglycan synthesis</keyword>
<keyword id="KW-1185">Reference proteome</keyword>
<accession>Q87WY0</accession>
<evidence type="ECO:0000255" key="1">
    <source>
        <dbReference type="HAMAP-Rule" id="MF_00208"/>
    </source>
</evidence>